<name>DIAP2_HUMAN</name>
<accession>O60879</accession>
<accession>A6NG19</accession>
<accession>O60878</accession>
<accession>Q8WX06</accession>
<accession>Q8WX48</accession>
<accession>Q9UJL2</accession>
<comment type="function">
    <text evidence="7">Could be involved in oogenesis. Involved in the regulation of endosome dynamics. Implicated in a novel signal transduction pathway, in which isoform 3 and CSK are sequentially activated by RHOD to regulate the motility of early endosomes through interactions with the actin cytoskeleton.</text>
</comment>
<comment type="subunit">
    <text evidence="7">Isoform 3 interacts with RHOD in the GTP-bound form.</text>
</comment>
<comment type="subcellular location">
    <molecule>Isoform 3</molecule>
    <subcellularLocation>
        <location>Cytoplasm</location>
        <location>Cytosol</location>
    </subcellularLocation>
    <subcellularLocation>
        <location>Early endosome</location>
    </subcellularLocation>
    <text>Isoform 3 is cytosolic but when coexpressed with RHOD, the 2 proteins colocalize to early endosomes.</text>
</comment>
<comment type="alternative products">
    <event type="alternative splicing"/>
    <isoform>
        <id>O60879-1</id>
        <name>1</name>
        <name>DIA-156</name>
        <sequence type="displayed"/>
    </isoform>
    <isoform>
        <id>O60879-2</id>
        <name>2</name>
        <name>DIA-12C</name>
        <name>DIA2B</name>
        <sequence type="described" ref="VSP_001573"/>
    </isoform>
    <isoform>
        <id>O60879-3</id>
        <name>3</name>
        <name>DIA2C</name>
        <sequence type="described" ref="VSP_012955 VSP_012956"/>
    </isoform>
</comment>
<comment type="tissue specificity">
    <text>Expressed in testis, ovary, small intestine, prostate, lung, liver, kidney and leukocytes.</text>
</comment>
<comment type="developmental stage">
    <text>Expressed from 16 dpc in ovary and testis and during P6-P16 during differentiation of ovarian follicles.</text>
</comment>
<comment type="domain">
    <text evidence="1">The DAD domain regulates activation via by an autoinhibitory interaction with the GBD/FH3 domain. This autoinhibition is released upon competitive binding of an activated GTPase. The release of DAD allows the FH2 domain to then nucleate and elongate nonbranched actin filaments (By similarity).</text>
</comment>
<comment type="disease" evidence="8">
    <disease id="DI-02191">
        <name>Premature ovarian failure 2A</name>
        <acronym>POF2A</acronym>
        <description>An ovarian disorder defined as the cessation of ovarian function under the age of 40 years. It is characterized by oligomenorrhea or amenorrhea, in the presence of elevated levels of serum gonadotropins and low estradiol.</description>
        <dbReference type="MIM" id="300511"/>
    </disease>
    <text>The disease is caused by variants affecting the gene represented in this entry.</text>
</comment>
<comment type="similarity">
    <text evidence="9">Belongs to the formin homology family. Diaphanous subfamily.</text>
</comment>
<feature type="chain" id="PRO_0000194895" description="Protein diaphanous homolog 2">
    <location>
        <begin position="1"/>
        <end position="1101"/>
    </location>
</feature>
<feature type="domain" description="GBD/FH3" evidence="4">
    <location>
        <begin position="98"/>
        <end position="464"/>
    </location>
</feature>
<feature type="domain" description="FH1">
    <location>
        <begin position="549"/>
        <end position="623"/>
    </location>
</feature>
<feature type="domain" description="FH2" evidence="5">
    <location>
        <begin position="628"/>
        <end position="1028"/>
    </location>
</feature>
<feature type="domain" description="DAD" evidence="3">
    <location>
        <begin position="1051"/>
        <end position="1081"/>
    </location>
</feature>
<feature type="region of interest" description="Disordered" evidence="6">
    <location>
        <begin position="1"/>
        <end position="44"/>
    </location>
</feature>
<feature type="region of interest" description="Disordered" evidence="6">
    <location>
        <begin position="536"/>
        <end position="594"/>
    </location>
</feature>
<feature type="region of interest" description="Disordered" evidence="6">
    <location>
        <begin position="1010"/>
        <end position="1048"/>
    </location>
</feature>
<feature type="region of interest" description="Disordered" evidence="6">
    <location>
        <begin position="1070"/>
        <end position="1101"/>
    </location>
</feature>
<feature type="coiled-coil region" evidence="2">
    <location>
        <begin position="366"/>
        <end position="418"/>
    </location>
</feature>
<feature type="coiled-coil region" evidence="2">
    <location>
        <begin position="487"/>
        <end position="547"/>
    </location>
</feature>
<feature type="coiled-coil region" evidence="2">
    <location>
        <begin position="903"/>
        <end position="1053"/>
    </location>
</feature>
<feature type="compositionally biased region" description="Gly residues" evidence="6">
    <location>
        <begin position="10"/>
        <end position="22"/>
    </location>
</feature>
<feature type="compositionally biased region" description="Polar residues" evidence="6">
    <location>
        <begin position="536"/>
        <end position="546"/>
    </location>
</feature>
<feature type="compositionally biased region" description="Pro residues" evidence="6">
    <location>
        <begin position="549"/>
        <end position="594"/>
    </location>
</feature>
<feature type="compositionally biased region" description="Basic and acidic residues" evidence="6">
    <location>
        <begin position="1010"/>
        <end position="1035"/>
    </location>
</feature>
<feature type="compositionally biased region" description="Basic and acidic residues" evidence="6">
    <location>
        <begin position="1078"/>
        <end position="1090"/>
    </location>
</feature>
<feature type="modified residue" description="N-acetylmethionine" evidence="10 11">
    <location>
        <position position="1"/>
    </location>
</feature>
<feature type="splice variant" id="VSP_012955" description="In isoform 3." evidence="9">
    <location>
        <begin position="45"/>
        <end position="55"/>
    </location>
</feature>
<feature type="splice variant" id="VSP_012956" description="In isoform 3." evidence="9">
    <original>S</original>
    <variation>SIVGSKVT</variation>
    <location>
        <position position="149"/>
    </location>
</feature>
<feature type="splice variant" id="VSP_001573" description="In isoform 2." evidence="9">
    <original>DNRRVPLERSRSRHNGAISSK</original>
    <variation>VVNHPCATRANPRSAT</variation>
    <location>
        <begin position="1081"/>
        <end position="1101"/>
    </location>
</feature>
<feature type="sequence variant" id="VAR_049095" description="In dbSNP:rs20361.">
    <original>F</original>
    <variation>L</variation>
    <location>
        <position position="425"/>
    </location>
</feature>
<feature type="sequence variant" id="VAR_049096" description="In dbSNP:rs20361.">
    <original>L</original>
    <variation>V</variation>
    <location>
        <position position="426"/>
    </location>
</feature>
<reference key="1">
    <citation type="journal article" date="1998" name="Am. J. Hum. Genet.">
        <title>A human homologue of the Drosophila melanogaster diaphanous gene is disrupted in a patient with premature ovarian failure: evidence for conserved function in oogenesis and implications for human sterility.</title>
        <authorList>
            <person name="Bione S."/>
            <person name="Sala C."/>
            <person name="Manzini C."/>
            <person name="Arrigo G."/>
            <person name="Zuffardi O."/>
            <person name="Banfi S."/>
            <person name="Borsani G."/>
            <person name="Jonveaux P."/>
            <person name="Philippe C."/>
            <person name="Zuccotti M."/>
            <person name="Ballabio A."/>
            <person name="Toniolo D."/>
        </authorList>
    </citation>
    <scope>NUCLEOTIDE SEQUENCE [MRNA]</scope>
    <scope>ALTERNATIVE SPLICING</scope>
    <scope>INVOLVEMENT IN POF2A</scope>
</reference>
<reference key="2">
    <citation type="journal article" date="2003" name="Nat. Cell Biol.">
        <title>RhoD regulates endosome dynamics through diaphanous-related formin and Src tyrosine kinase.</title>
        <authorList>
            <person name="Gasman S."/>
            <person name="Kalaidzidis Y."/>
            <person name="Zerial M."/>
        </authorList>
    </citation>
    <scope>NUCLEOTIDE SEQUENCE (ISOFORM 3)</scope>
    <scope>INTERACTION WITH RHOD</scope>
    <scope>SUBCELLULAR LOCATION</scope>
    <scope>FUNCTION</scope>
</reference>
<reference key="3">
    <citation type="journal article" date="2003" name="Nat. Cell Biol.">
        <authorList>
            <person name="Gasman S."/>
            <person name="Kalaidzidis Y."/>
            <person name="Zerial M."/>
        </authorList>
    </citation>
    <scope>ERRATUM OF PUBMED:12577064</scope>
</reference>
<reference key="4">
    <citation type="journal article" date="2005" name="Nature">
        <title>The DNA sequence of the human X chromosome.</title>
        <authorList>
            <person name="Ross M.T."/>
            <person name="Grafham D.V."/>
            <person name="Coffey A.J."/>
            <person name="Scherer S."/>
            <person name="McLay K."/>
            <person name="Muzny D."/>
            <person name="Platzer M."/>
            <person name="Howell G.R."/>
            <person name="Burrows C."/>
            <person name="Bird C.P."/>
            <person name="Frankish A."/>
            <person name="Lovell F.L."/>
            <person name="Howe K.L."/>
            <person name="Ashurst J.L."/>
            <person name="Fulton R.S."/>
            <person name="Sudbrak R."/>
            <person name="Wen G."/>
            <person name="Jones M.C."/>
            <person name="Hurles M.E."/>
            <person name="Andrews T.D."/>
            <person name="Scott C.E."/>
            <person name="Searle S."/>
            <person name="Ramser J."/>
            <person name="Whittaker A."/>
            <person name="Deadman R."/>
            <person name="Carter N.P."/>
            <person name="Hunt S.E."/>
            <person name="Chen R."/>
            <person name="Cree A."/>
            <person name="Gunaratne P."/>
            <person name="Havlak P."/>
            <person name="Hodgson A."/>
            <person name="Metzker M.L."/>
            <person name="Richards S."/>
            <person name="Scott G."/>
            <person name="Steffen D."/>
            <person name="Sodergren E."/>
            <person name="Wheeler D.A."/>
            <person name="Worley K.C."/>
            <person name="Ainscough R."/>
            <person name="Ambrose K.D."/>
            <person name="Ansari-Lari M.A."/>
            <person name="Aradhya S."/>
            <person name="Ashwell R.I."/>
            <person name="Babbage A.K."/>
            <person name="Bagguley C.L."/>
            <person name="Ballabio A."/>
            <person name="Banerjee R."/>
            <person name="Barker G.E."/>
            <person name="Barlow K.F."/>
            <person name="Barrett I.P."/>
            <person name="Bates K.N."/>
            <person name="Beare D.M."/>
            <person name="Beasley H."/>
            <person name="Beasley O."/>
            <person name="Beck A."/>
            <person name="Bethel G."/>
            <person name="Blechschmidt K."/>
            <person name="Brady N."/>
            <person name="Bray-Allen S."/>
            <person name="Bridgeman A.M."/>
            <person name="Brown A.J."/>
            <person name="Brown M.J."/>
            <person name="Bonnin D."/>
            <person name="Bruford E.A."/>
            <person name="Buhay C."/>
            <person name="Burch P."/>
            <person name="Burford D."/>
            <person name="Burgess J."/>
            <person name="Burrill W."/>
            <person name="Burton J."/>
            <person name="Bye J.M."/>
            <person name="Carder C."/>
            <person name="Carrel L."/>
            <person name="Chako J."/>
            <person name="Chapman J.C."/>
            <person name="Chavez D."/>
            <person name="Chen E."/>
            <person name="Chen G."/>
            <person name="Chen Y."/>
            <person name="Chen Z."/>
            <person name="Chinault C."/>
            <person name="Ciccodicola A."/>
            <person name="Clark S.Y."/>
            <person name="Clarke G."/>
            <person name="Clee C.M."/>
            <person name="Clegg S."/>
            <person name="Clerc-Blankenburg K."/>
            <person name="Clifford K."/>
            <person name="Cobley V."/>
            <person name="Cole C.G."/>
            <person name="Conquer J.S."/>
            <person name="Corby N."/>
            <person name="Connor R.E."/>
            <person name="David R."/>
            <person name="Davies J."/>
            <person name="Davis C."/>
            <person name="Davis J."/>
            <person name="Delgado O."/>
            <person name="Deshazo D."/>
            <person name="Dhami P."/>
            <person name="Ding Y."/>
            <person name="Dinh H."/>
            <person name="Dodsworth S."/>
            <person name="Draper H."/>
            <person name="Dugan-Rocha S."/>
            <person name="Dunham A."/>
            <person name="Dunn M."/>
            <person name="Durbin K.J."/>
            <person name="Dutta I."/>
            <person name="Eades T."/>
            <person name="Ellwood M."/>
            <person name="Emery-Cohen A."/>
            <person name="Errington H."/>
            <person name="Evans K.L."/>
            <person name="Faulkner L."/>
            <person name="Francis F."/>
            <person name="Frankland J."/>
            <person name="Fraser A.E."/>
            <person name="Galgoczy P."/>
            <person name="Gilbert J."/>
            <person name="Gill R."/>
            <person name="Gloeckner G."/>
            <person name="Gregory S.G."/>
            <person name="Gribble S."/>
            <person name="Griffiths C."/>
            <person name="Grocock R."/>
            <person name="Gu Y."/>
            <person name="Gwilliam R."/>
            <person name="Hamilton C."/>
            <person name="Hart E.A."/>
            <person name="Hawes A."/>
            <person name="Heath P.D."/>
            <person name="Heitmann K."/>
            <person name="Hennig S."/>
            <person name="Hernandez J."/>
            <person name="Hinzmann B."/>
            <person name="Ho S."/>
            <person name="Hoffs M."/>
            <person name="Howden P.J."/>
            <person name="Huckle E.J."/>
            <person name="Hume J."/>
            <person name="Hunt P.J."/>
            <person name="Hunt A.R."/>
            <person name="Isherwood J."/>
            <person name="Jacob L."/>
            <person name="Johnson D."/>
            <person name="Jones S."/>
            <person name="de Jong P.J."/>
            <person name="Joseph S.S."/>
            <person name="Keenan S."/>
            <person name="Kelly S."/>
            <person name="Kershaw J.K."/>
            <person name="Khan Z."/>
            <person name="Kioschis P."/>
            <person name="Klages S."/>
            <person name="Knights A.J."/>
            <person name="Kosiura A."/>
            <person name="Kovar-Smith C."/>
            <person name="Laird G.K."/>
            <person name="Langford C."/>
            <person name="Lawlor S."/>
            <person name="Leversha M."/>
            <person name="Lewis L."/>
            <person name="Liu W."/>
            <person name="Lloyd C."/>
            <person name="Lloyd D.M."/>
            <person name="Loulseged H."/>
            <person name="Loveland J.E."/>
            <person name="Lovell J.D."/>
            <person name="Lozado R."/>
            <person name="Lu J."/>
            <person name="Lyne R."/>
            <person name="Ma J."/>
            <person name="Maheshwari M."/>
            <person name="Matthews L.H."/>
            <person name="McDowall J."/>
            <person name="McLaren S."/>
            <person name="McMurray A."/>
            <person name="Meidl P."/>
            <person name="Meitinger T."/>
            <person name="Milne S."/>
            <person name="Miner G."/>
            <person name="Mistry S.L."/>
            <person name="Morgan M."/>
            <person name="Morris S."/>
            <person name="Mueller I."/>
            <person name="Mullikin J.C."/>
            <person name="Nguyen N."/>
            <person name="Nordsiek G."/>
            <person name="Nyakatura G."/>
            <person name="O'dell C.N."/>
            <person name="Okwuonu G."/>
            <person name="Palmer S."/>
            <person name="Pandian R."/>
            <person name="Parker D."/>
            <person name="Parrish J."/>
            <person name="Pasternak S."/>
            <person name="Patel D."/>
            <person name="Pearce A.V."/>
            <person name="Pearson D.M."/>
            <person name="Pelan S.E."/>
            <person name="Perez L."/>
            <person name="Porter K.M."/>
            <person name="Ramsey Y."/>
            <person name="Reichwald K."/>
            <person name="Rhodes S."/>
            <person name="Ridler K.A."/>
            <person name="Schlessinger D."/>
            <person name="Schueler M.G."/>
            <person name="Sehra H.K."/>
            <person name="Shaw-Smith C."/>
            <person name="Shen H."/>
            <person name="Sheridan E.M."/>
            <person name="Shownkeen R."/>
            <person name="Skuce C.D."/>
            <person name="Smith M.L."/>
            <person name="Sotheran E.C."/>
            <person name="Steingruber H.E."/>
            <person name="Steward C.A."/>
            <person name="Storey R."/>
            <person name="Swann R.M."/>
            <person name="Swarbreck D."/>
            <person name="Tabor P.E."/>
            <person name="Taudien S."/>
            <person name="Taylor T."/>
            <person name="Teague B."/>
            <person name="Thomas K."/>
            <person name="Thorpe A."/>
            <person name="Timms K."/>
            <person name="Tracey A."/>
            <person name="Trevanion S."/>
            <person name="Tromans A.C."/>
            <person name="d'Urso M."/>
            <person name="Verduzco D."/>
            <person name="Villasana D."/>
            <person name="Waldron L."/>
            <person name="Wall M."/>
            <person name="Wang Q."/>
            <person name="Warren J."/>
            <person name="Warry G.L."/>
            <person name="Wei X."/>
            <person name="West A."/>
            <person name="Whitehead S.L."/>
            <person name="Whiteley M.N."/>
            <person name="Wilkinson J.E."/>
            <person name="Willey D.L."/>
            <person name="Williams G."/>
            <person name="Williams L."/>
            <person name="Williamson A."/>
            <person name="Williamson H."/>
            <person name="Wilming L."/>
            <person name="Woodmansey R.L."/>
            <person name="Wray P.W."/>
            <person name="Yen J."/>
            <person name="Zhang J."/>
            <person name="Zhou J."/>
            <person name="Zoghbi H."/>
            <person name="Zorilla S."/>
            <person name="Buck D."/>
            <person name="Reinhardt R."/>
            <person name="Poustka A."/>
            <person name="Rosenthal A."/>
            <person name="Lehrach H."/>
            <person name="Meindl A."/>
            <person name="Minx P.J."/>
            <person name="Hillier L.W."/>
            <person name="Willard H.F."/>
            <person name="Wilson R.K."/>
            <person name="Waterston R.H."/>
            <person name="Rice C.M."/>
            <person name="Vaudin M."/>
            <person name="Coulson A."/>
            <person name="Nelson D.L."/>
            <person name="Weinstock G."/>
            <person name="Sulston J.E."/>
            <person name="Durbin R.M."/>
            <person name="Hubbard T."/>
            <person name="Gibbs R.A."/>
            <person name="Beck S."/>
            <person name="Rogers J."/>
            <person name="Bentley D.R."/>
        </authorList>
    </citation>
    <scope>NUCLEOTIDE SEQUENCE [LARGE SCALE GENOMIC DNA]</scope>
</reference>
<reference key="5">
    <citation type="journal article" date="2009" name="Anal. Chem.">
        <title>Lys-N and trypsin cover complementary parts of the phosphoproteome in a refined SCX-based approach.</title>
        <authorList>
            <person name="Gauci S."/>
            <person name="Helbig A.O."/>
            <person name="Slijper M."/>
            <person name="Krijgsveld J."/>
            <person name="Heck A.J."/>
            <person name="Mohammed S."/>
        </authorList>
    </citation>
    <scope>ACETYLATION [LARGE SCALE ANALYSIS] AT MET-1</scope>
    <scope>IDENTIFICATION BY MASS SPECTROMETRY [LARGE SCALE ANALYSIS]</scope>
</reference>
<reference key="6">
    <citation type="journal article" date="2011" name="BMC Syst. Biol.">
        <title>Initial characterization of the human central proteome.</title>
        <authorList>
            <person name="Burkard T.R."/>
            <person name="Planyavsky M."/>
            <person name="Kaupe I."/>
            <person name="Breitwieser F.P."/>
            <person name="Buerckstuemmer T."/>
            <person name="Bennett K.L."/>
            <person name="Superti-Furga G."/>
            <person name="Colinge J."/>
        </authorList>
    </citation>
    <scope>IDENTIFICATION BY MASS SPECTROMETRY [LARGE SCALE ANALYSIS]</scope>
</reference>
<reference key="7">
    <citation type="journal article" date="2012" name="Proc. Natl. Acad. Sci. U.S.A.">
        <title>N-terminal acetylome analyses and functional insights of the N-terminal acetyltransferase NatB.</title>
        <authorList>
            <person name="Van Damme P."/>
            <person name="Lasa M."/>
            <person name="Polevoda B."/>
            <person name="Gazquez C."/>
            <person name="Elosegui-Artola A."/>
            <person name="Kim D.S."/>
            <person name="De Juan-Pardo E."/>
            <person name="Demeyer K."/>
            <person name="Hole K."/>
            <person name="Larrea E."/>
            <person name="Timmerman E."/>
            <person name="Prieto J."/>
            <person name="Arnesen T."/>
            <person name="Sherman F."/>
            <person name="Gevaert K."/>
            <person name="Aldabe R."/>
        </authorList>
    </citation>
    <scope>ACETYLATION [LARGE SCALE ANALYSIS] AT MET-1</scope>
    <scope>IDENTIFICATION BY MASS SPECTROMETRY [LARGE SCALE ANALYSIS]</scope>
</reference>
<proteinExistence type="evidence at protein level"/>
<dbReference type="EMBL" id="Y15909">
    <property type="protein sequence ID" value="CAA75870.1"/>
    <property type="molecule type" value="mRNA"/>
</dbReference>
<dbReference type="EMBL" id="Y15908">
    <property type="protein sequence ID" value="CAA75869.1"/>
    <property type="molecule type" value="mRNA"/>
</dbReference>
<dbReference type="EMBL" id="AL031053">
    <property type="status" value="NOT_ANNOTATED_CDS"/>
    <property type="molecule type" value="Genomic_DNA"/>
</dbReference>
<dbReference type="EMBL" id="AL139809">
    <property type="status" value="NOT_ANNOTATED_CDS"/>
    <property type="molecule type" value="Genomic_DNA"/>
</dbReference>
<dbReference type="EMBL" id="AL161624">
    <property type="status" value="NOT_ANNOTATED_CDS"/>
    <property type="molecule type" value="Genomic_DNA"/>
</dbReference>
<dbReference type="EMBL" id="AL391821">
    <property type="status" value="NOT_ANNOTATED_CDS"/>
    <property type="molecule type" value="Genomic_DNA"/>
</dbReference>
<dbReference type="EMBL" id="AL592157">
    <property type="status" value="NOT_ANNOTATED_CDS"/>
    <property type="molecule type" value="Genomic_DNA"/>
</dbReference>
<dbReference type="EMBL" id="AL606530">
    <property type="status" value="NOT_ANNOTATED_CDS"/>
    <property type="molecule type" value="Genomic_DNA"/>
</dbReference>
<dbReference type="EMBL" id="AL669876">
    <property type="status" value="NOT_ANNOTATED_CDS"/>
    <property type="molecule type" value="Genomic_DNA"/>
</dbReference>
<dbReference type="EMBL" id="Z86061">
    <property type="status" value="NOT_ANNOTATED_CDS"/>
    <property type="molecule type" value="Genomic_DNA"/>
</dbReference>
<dbReference type="CCDS" id="CCDS14467.1">
    <molecule id="O60879-1"/>
</dbReference>
<dbReference type="CCDS" id="CCDS14468.1">
    <molecule id="O60879-2"/>
</dbReference>
<dbReference type="RefSeq" id="NP_006720.1">
    <molecule id="O60879-1"/>
    <property type="nucleotide sequence ID" value="NM_006729.5"/>
</dbReference>
<dbReference type="RefSeq" id="NP_009293.1">
    <molecule id="O60879-2"/>
    <property type="nucleotide sequence ID" value="NM_007309.4"/>
</dbReference>
<dbReference type="SMR" id="O60879"/>
<dbReference type="BioGRID" id="108074">
    <property type="interactions" value="57"/>
</dbReference>
<dbReference type="DIP" id="DIP-47261N"/>
<dbReference type="FunCoup" id="O60879">
    <property type="interactions" value="1293"/>
</dbReference>
<dbReference type="IntAct" id="O60879">
    <property type="interactions" value="17"/>
</dbReference>
<dbReference type="MINT" id="O60879"/>
<dbReference type="STRING" id="9606.ENSP00000321348"/>
<dbReference type="iPTMnet" id="O60879"/>
<dbReference type="PhosphoSitePlus" id="O60879"/>
<dbReference type="BioMuta" id="DIAPH2"/>
<dbReference type="jPOST" id="O60879"/>
<dbReference type="MassIVE" id="O60879"/>
<dbReference type="PaxDb" id="9606-ENSP00000321348"/>
<dbReference type="PeptideAtlas" id="O60879"/>
<dbReference type="ProteomicsDB" id="49639">
    <molecule id="O60879-1"/>
</dbReference>
<dbReference type="ProteomicsDB" id="49640">
    <molecule id="O60879-2"/>
</dbReference>
<dbReference type="ProteomicsDB" id="49641">
    <molecule id="O60879-3"/>
</dbReference>
<dbReference type="Pumba" id="O60879"/>
<dbReference type="Antibodypedia" id="471">
    <property type="antibodies" value="279 antibodies from 34 providers"/>
</dbReference>
<dbReference type="DNASU" id="1730"/>
<dbReference type="Ensembl" id="ENST00000324765.13">
    <molecule id="O60879-1"/>
    <property type="protein sequence ID" value="ENSP00000321348.8"/>
    <property type="gene ID" value="ENSG00000147202.19"/>
</dbReference>
<dbReference type="Ensembl" id="ENST00000373049.8">
    <molecule id="O60879-2"/>
    <property type="protein sequence ID" value="ENSP00000362140.4"/>
    <property type="gene ID" value="ENSG00000147202.19"/>
</dbReference>
<dbReference type="GeneID" id="1730"/>
<dbReference type="KEGG" id="hsa:1730"/>
<dbReference type="MANE-Select" id="ENST00000324765.13">
    <property type="protein sequence ID" value="ENSP00000321348.8"/>
    <property type="RefSeq nucleotide sequence ID" value="NM_006729.5"/>
    <property type="RefSeq protein sequence ID" value="NP_006720.1"/>
</dbReference>
<dbReference type="UCSC" id="uc004eft.5">
    <molecule id="O60879-1"/>
    <property type="organism name" value="human"/>
</dbReference>
<dbReference type="AGR" id="HGNC:2877"/>
<dbReference type="CTD" id="1730"/>
<dbReference type="DisGeNET" id="1730"/>
<dbReference type="GeneCards" id="DIAPH2"/>
<dbReference type="HGNC" id="HGNC:2877">
    <property type="gene designation" value="DIAPH2"/>
</dbReference>
<dbReference type="HPA" id="ENSG00000147202">
    <property type="expression patterns" value="Low tissue specificity"/>
</dbReference>
<dbReference type="MalaCards" id="DIAPH2"/>
<dbReference type="MIM" id="300108">
    <property type="type" value="gene"/>
</dbReference>
<dbReference type="MIM" id="300511">
    <property type="type" value="phenotype"/>
</dbReference>
<dbReference type="neXtProt" id="NX_O60879"/>
<dbReference type="OpenTargets" id="ENSG00000147202"/>
<dbReference type="PharmGKB" id="PA27334"/>
<dbReference type="VEuPathDB" id="HostDB:ENSG00000147202"/>
<dbReference type="eggNOG" id="KOG1924">
    <property type="taxonomic scope" value="Eukaryota"/>
</dbReference>
<dbReference type="GeneTree" id="ENSGT00940000157822"/>
<dbReference type="InParanoid" id="O60879"/>
<dbReference type="OrthoDB" id="1104827at2759"/>
<dbReference type="PAN-GO" id="O60879">
    <property type="GO annotations" value="2 GO annotations based on evolutionary models"/>
</dbReference>
<dbReference type="PhylomeDB" id="O60879"/>
<dbReference type="TreeFam" id="TF315383"/>
<dbReference type="PathwayCommons" id="O60879"/>
<dbReference type="Reactome" id="R-HSA-5663220">
    <property type="pathway name" value="RHO GTPases Activate Formins"/>
</dbReference>
<dbReference type="Reactome" id="R-HSA-9013405">
    <molecule id="O60879-3"/>
    <property type="pathway name" value="RHOD GTPase cycle"/>
</dbReference>
<dbReference type="Reactome" id="R-HSA-9035034">
    <property type="pathway name" value="RHOF GTPase cycle"/>
</dbReference>
<dbReference type="SignaLink" id="O60879"/>
<dbReference type="SIGNOR" id="O60879"/>
<dbReference type="BioGRID-ORCS" id="1730">
    <property type="hits" value="15 hits in 770 CRISPR screens"/>
</dbReference>
<dbReference type="ChiTaRS" id="DIAPH2">
    <property type="organism name" value="human"/>
</dbReference>
<dbReference type="GeneWiki" id="DIAPH2"/>
<dbReference type="GenomeRNAi" id="1730"/>
<dbReference type="Pharos" id="O60879">
    <property type="development level" value="Tbio"/>
</dbReference>
<dbReference type="PRO" id="PR:O60879"/>
<dbReference type="Proteomes" id="UP000005640">
    <property type="component" value="Chromosome X"/>
</dbReference>
<dbReference type="RNAct" id="O60879">
    <property type="molecule type" value="protein"/>
</dbReference>
<dbReference type="Bgee" id="ENSG00000147202">
    <property type="expression patterns" value="Expressed in buccal mucosa cell and 200 other cell types or tissues"/>
</dbReference>
<dbReference type="ExpressionAtlas" id="O60879">
    <property type="expression patterns" value="baseline and differential"/>
</dbReference>
<dbReference type="GO" id="GO:0005884">
    <property type="term" value="C:actin filament"/>
    <property type="evidence" value="ECO:0000318"/>
    <property type="project" value="GO_Central"/>
</dbReference>
<dbReference type="GO" id="GO:0005829">
    <property type="term" value="C:cytosol"/>
    <property type="evidence" value="ECO:0000304"/>
    <property type="project" value="Reactome"/>
</dbReference>
<dbReference type="GO" id="GO:0005769">
    <property type="term" value="C:early endosome"/>
    <property type="evidence" value="ECO:0007669"/>
    <property type="project" value="UniProtKB-SubCell"/>
</dbReference>
<dbReference type="GO" id="GO:0005783">
    <property type="term" value="C:endoplasmic reticulum"/>
    <property type="evidence" value="ECO:0000314"/>
    <property type="project" value="HPA"/>
</dbReference>
<dbReference type="GO" id="GO:0043231">
    <property type="term" value="C:intracellular membrane-bounded organelle"/>
    <property type="evidence" value="ECO:0000314"/>
    <property type="project" value="HPA"/>
</dbReference>
<dbReference type="GO" id="GO:0005730">
    <property type="term" value="C:nucleolus"/>
    <property type="evidence" value="ECO:0000314"/>
    <property type="project" value="HPA"/>
</dbReference>
<dbReference type="GO" id="GO:0003779">
    <property type="term" value="F:actin binding"/>
    <property type="evidence" value="ECO:0007669"/>
    <property type="project" value="InterPro"/>
</dbReference>
<dbReference type="GO" id="GO:0005102">
    <property type="term" value="F:signaling receptor binding"/>
    <property type="evidence" value="ECO:0000304"/>
    <property type="project" value="ProtInc"/>
</dbReference>
<dbReference type="GO" id="GO:0031267">
    <property type="term" value="F:small GTPase binding"/>
    <property type="evidence" value="ECO:0007669"/>
    <property type="project" value="InterPro"/>
</dbReference>
<dbReference type="GO" id="GO:0030041">
    <property type="term" value="P:actin filament polymerization"/>
    <property type="evidence" value="ECO:0000318"/>
    <property type="project" value="GO_Central"/>
</dbReference>
<dbReference type="GO" id="GO:0007292">
    <property type="term" value="P:female gamete generation"/>
    <property type="evidence" value="ECO:0000304"/>
    <property type="project" value="ProtInc"/>
</dbReference>
<dbReference type="GO" id="GO:0048477">
    <property type="term" value="P:oogenesis"/>
    <property type="evidence" value="ECO:0007669"/>
    <property type="project" value="UniProtKB-KW"/>
</dbReference>
<dbReference type="FunFam" id="1.20.58.630:FF:000001">
    <property type="entry name" value="Diaphanous related formin 1"/>
    <property type="match status" value="1"/>
</dbReference>
<dbReference type="FunFam" id="1.10.20.40:FF:000001">
    <property type="entry name" value="Diaphanous related formin 2"/>
    <property type="match status" value="1"/>
</dbReference>
<dbReference type="FunFam" id="1.25.10.10:FF:000033">
    <property type="entry name" value="Diaphanous related formin 2"/>
    <property type="match status" value="1"/>
</dbReference>
<dbReference type="FunFam" id="1.20.58.2220:FF:000003">
    <property type="entry name" value="protein diaphanous homolog 1 isoform X2"/>
    <property type="match status" value="1"/>
</dbReference>
<dbReference type="FunFam" id="1.10.238.150:FF:000002">
    <property type="entry name" value="protein diaphanous homolog 2 isoform X2"/>
    <property type="match status" value="1"/>
</dbReference>
<dbReference type="Gene3D" id="1.20.58.630">
    <property type="match status" value="1"/>
</dbReference>
<dbReference type="Gene3D" id="6.10.30.30">
    <property type="match status" value="1"/>
</dbReference>
<dbReference type="Gene3D" id="1.10.20.40">
    <property type="entry name" value="Formin, diaphanous GTPase-binding domain"/>
    <property type="match status" value="1"/>
</dbReference>
<dbReference type="Gene3D" id="1.20.58.2220">
    <property type="entry name" value="Formin, FH2 domain"/>
    <property type="match status" value="1"/>
</dbReference>
<dbReference type="Gene3D" id="1.10.238.150">
    <property type="entry name" value="Formin, FH3 diaphanous domain"/>
    <property type="match status" value="1"/>
</dbReference>
<dbReference type="Gene3D" id="1.25.10.10">
    <property type="entry name" value="Leucine-rich Repeat Variant"/>
    <property type="match status" value="1"/>
</dbReference>
<dbReference type="InterPro" id="IPR011989">
    <property type="entry name" value="ARM-like"/>
</dbReference>
<dbReference type="InterPro" id="IPR016024">
    <property type="entry name" value="ARM-type_fold"/>
</dbReference>
<dbReference type="InterPro" id="IPR014767">
    <property type="entry name" value="DAD_dom"/>
</dbReference>
<dbReference type="InterPro" id="IPR044933">
    <property type="entry name" value="DIA_GBD_sf"/>
</dbReference>
<dbReference type="InterPro" id="IPR015425">
    <property type="entry name" value="FH2_Formin"/>
</dbReference>
<dbReference type="InterPro" id="IPR042201">
    <property type="entry name" value="FH2_Formin_sf"/>
</dbReference>
<dbReference type="InterPro" id="IPR010472">
    <property type="entry name" value="FH3_dom"/>
</dbReference>
<dbReference type="InterPro" id="IPR051412">
    <property type="entry name" value="Formin_Homology_Diaphanous_sf"/>
</dbReference>
<dbReference type="InterPro" id="IPR014768">
    <property type="entry name" value="GBD/FH3_dom"/>
</dbReference>
<dbReference type="InterPro" id="IPR010473">
    <property type="entry name" value="GTPase-bd"/>
</dbReference>
<dbReference type="PANTHER" id="PTHR45691">
    <property type="entry name" value="PROTEIN DIAPHANOUS"/>
    <property type="match status" value="1"/>
</dbReference>
<dbReference type="PANTHER" id="PTHR45691:SF3">
    <property type="entry name" value="PROTEIN DIAPHANOUS HOMOLOG 2"/>
    <property type="match status" value="1"/>
</dbReference>
<dbReference type="Pfam" id="PF06367">
    <property type="entry name" value="Drf_FH3"/>
    <property type="match status" value="1"/>
</dbReference>
<dbReference type="Pfam" id="PF06371">
    <property type="entry name" value="Drf_GBD"/>
    <property type="match status" value="1"/>
</dbReference>
<dbReference type="Pfam" id="PF02181">
    <property type="entry name" value="FH2"/>
    <property type="match status" value="1"/>
</dbReference>
<dbReference type="SMART" id="SM01139">
    <property type="entry name" value="Drf_FH3"/>
    <property type="match status" value="1"/>
</dbReference>
<dbReference type="SMART" id="SM01140">
    <property type="entry name" value="Drf_GBD"/>
    <property type="match status" value="1"/>
</dbReference>
<dbReference type="SMART" id="SM00498">
    <property type="entry name" value="FH2"/>
    <property type="match status" value="1"/>
</dbReference>
<dbReference type="SUPFAM" id="SSF48371">
    <property type="entry name" value="ARM repeat"/>
    <property type="match status" value="1"/>
</dbReference>
<dbReference type="SUPFAM" id="SSF101447">
    <property type="entry name" value="Formin homology 2 domain (FH2 domain)"/>
    <property type="match status" value="1"/>
</dbReference>
<dbReference type="PROSITE" id="PS51231">
    <property type="entry name" value="DAD"/>
    <property type="match status" value="1"/>
</dbReference>
<dbReference type="PROSITE" id="PS51444">
    <property type="entry name" value="FH2"/>
    <property type="match status" value="1"/>
</dbReference>
<dbReference type="PROSITE" id="PS51232">
    <property type="entry name" value="GBD_FH3"/>
    <property type="match status" value="1"/>
</dbReference>
<organism>
    <name type="scientific">Homo sapiens</name>
    <name type="common">Human</name>
    <dbReference type="NCBI Taxonomy" id="9606"/>
    <lineage>
        <taxon>Eukaryota</taxon>
        <taxon>Metazoa</taxon>
        <taxon>Chordata</taxon>
        <taxon>Craniata</taxon>
        <taxon>Vertebrata</taxon>
        <taxon>Euteleostomi</taxon>
        <taxon>Mammalia</taxon>
        <taxon>Eutheria</taxon>
        <taxon>Euarchontoglires</taxon>
        <taxon>Primates</taxon>
        <taxon>Haplorrhini</taxon>
        <taxon>Catarrhini</taxon>
        <taxon>Hominidae</taxon>
        <taxon>Homo</taxon>
    </lineage>
</organism>
<gene>
    <name type="primary">DIAPH2</name>
    <name type="synonym">DIA</name>
</gene>
<evidence type="ECO:0000250" key="1"/>
<evidence type="ECO:0000255" key="2"/>
<evidence type="ECO:0000255" key="3">
    <source>
        <dbReference type="PROSITE-ProRule" id="PRU00577"/>
    </source>
</evidence>
<evidence type="ECO:0000255" key="4">
    <source>
        <dbReference type="PROSITE-ProRule" id="PRU00579"/>
    </source>
</evidence>
<evidence type="ECO:0000255" key="5">
    <source>
        <dbReference type="PROSITE-ProRule" id="PRU00774"/>
    </source>
</evidence>
<evidence type="ECO:0000256" key="6">
    <source>
        <dbReference type="SAM" id="MobiDB-lite"/>
    </source>
</evidence>
<evidence type="ECO:0000269" key="7">
    <source>
    </source>
</evidence>
<evidence type="ECO:0000269" key="8">
    <source>
    </source>
</evidence>
<evidence type="ECO:0000305" key="9"/>
<evidence type="ECO:0007744" key="10">
    <source>
    </source>
</evidence>
<evidence type="ECO:0007744" key="11">
    <source>
    </source>
</evidence>
<keyword id="KW-0007">Acetylation</keyword>
<keyword id="KW-0025">Alternative splicing</keyword>
<keyword id="KW-0175">Coiled coil</keyword>
<keyword id="KW-0963">Cytoplasm</keyword>
<keyword id="KW-0217">Developmental protein</keyword>
<keyword id="KW-0221">Differentiation</keyword>
<keyword id="KW-0967">Endosome</keyword>
<keyword id="KW-0896">Oogenesis</keyword>
<keyword id="KW-1066">Premature ovarian failure</keyword>
<keyword id="KW-1267">Proteomics identification</keyword>
<keyword id="KW-1185">Reference proteome</keyword>
<keyword id="KW-0677">Repeat</keyword>
<sequence length="1101" mass="125569">MEQPGAAASGAGGGSEEPGGGRSNKRSAGNRAANEEETKNKPKLNIQIKTLADDVRDRITSFRKSTVKKEKPLIQHPIDSQVAMSEFPAAQPLYDERSLNLSEKEVLDLFEKMMEDMNLNEEKKAPLRNKDFTTKREMVVQYISATAKSGGLKNSKHECTLSSQEYVHELRSGISDEKLLNCLESLRVSLTSNPVSWVNNFGHEGLGLLLDELEKLLDKKQQENIDKKNQYKLIQCLKAFMNNKFGLQRILGDERSLLLLARAIDPKQPNMMTEIVKILSAICIVGEENILDKLLGAITTAAERNNRERFSPIVEGLENQEALQLQVACMQFINALVTSPYELDFRIHLRNEFLRSGLKTMLPDLKEKENDELDIQLKVFDENKEDDLTELSHRLNDIRAEMDDMNEVYHLLYNMLKDTAAENYFLSILQHFLLIRNDYYIRPQYYKIIEECVSQIVLHCSGMDPDFKYRQRLDIDLTHLIDSCVNKAKVEESEQKAAEFSKKFDEEFTARQEAQAELQKRDEKIKELEAEIQQLRTQAQVLSSSSGIPGPPAAPPLPGVGPPPPPPAPPLPGGAPLPPPPPPLPGMMGIPPPPPPPLLFGGPPPPPPLGGVPPPPGISLNLPYGMKQKKMYKPEVSMKRINWSKIEPTELSENCFWLRVKEDKFENPDLFAKLALNFATQIKVQKNAEALEEKKTGPTKKKVKELRILDPKTAQNLSIFLGSYRMPYEDIRNVILEVNEDMLSEALIQNLVKHLPEQKILNELAELKNEYDDLCEPEQFGVVMSSVKMLQPRLSSILFKLTFEEHINNIKPSIIAVTLACEELKKSESFNRLLELVLLVGNYMNSGSRNAQSLGFKINFLCKIRDTKSADQKTTLLHFIADICEEKYRDILKFPEELEHVESASKVSAQILKSNLASMEQQIVHLERDIKKFPQAENQHDKFVEKMTSFTKTAREQYEKLSTMHNNMMKLYENLGEYFIFDSKTVSIEEFFGDLNNFRTLFLEAVRENNKRREMEEKTRRAKLAKEKAEQEKLERQKKKKQLIDINKEGDETGVMDNLLEALQSGAAFRDRRKRIPRNPDNRRVPLERSRSRHNGAISSK</sequence>
<protein>
    <recommendedName>
        <fullName>Protein diaphanous homolog 2</fullName>
    </recommendedName>
    <alternativeName>
        <fullName>Diaphanous-related formin-2</fullName>
        <shortName>DRF2</shortName>
    </alternativeName>
</protein>